<accession>C4K759</accession>
<proteinExistence type="inferred from homology"/>
<protein>
    <recommendedName>
        <fullName evidence="1">Methionine--tRNA ligase</fullName>
        <ecNumber evidence="1">6.1.1.10</ecNumber>
    </recommendedName>
    <alternativeName>
        <fullName evidence="1">Methionyl-tRNA synthetase</fullName>
        <shortName evidence="1">MetRS</shortName>
    </alternativeName>
</protein>
<comment type="function">
    <text evidence="1">Is required not only for elongation of protein synthesis but also for the initiation of all mRNA translation through initiator tRNA(fMet) aminoacylation.</text>
</comment>
<comment type="catalytic activity">
    <reaction evidence="1">
        <text>tRNA(Met) + L-methionine + ATP = L-methionyl-tRNA(Met) + AMP + diphosphate</text>
        <dbReference type="Rhea" id="RHEA:13481"/>
        <dbReference type="Rhea" id="RHEA-COMP:9667"/>
        <dbReference type="Rhea" id="RHEA-COMP:9698"/>
        <dbReference type="ChEBI" id="CHEBI:30616"/>
        <dbReference type="ChEBI" id="CHEBI:33019"/>
        <dbReference type="ChEBI" id="CHEBI:57844"/>
        <dbReference type="ChEBI" id="CHEBI:78442"/>
        <dbReference type="ChEBI" id="CHEBI:78530"/>
        <dbReference type="ChEBI" id="CHEBI:456215"/>
        <dbReference type="EC" id="6.1.1.10"/>
    </reaction>
</comment>
<comment type="cofactor">
    <cofactor evidence="1">
        <name>Zn(2+)</name>
        <dbReference type="ChEBI" id="CHEBI:29105"/>
    </cofactor>
    <text evidence="1">Binds 1 zinc ion per subunit.</text>
</comment>
<comment type="subunit">
    <text evidence="1">Monomer.</text>
</comment>
<comment type="subcellular location">
    <subcellularLocation>
        <location evidence="1">Cytoplasm</location>
    </subcellularLocation>
</comment>
<comment type="similarity">
    <text evidence="1">Belongs to the class-I aminoacyl-tRNA synthetase family. MetG type 1 subfamily.</text>
</comment>
<reference key="1">
    <citation type="journal article" date="2009" name="Proc. Natl. Acad. Sci. U.S.A.">
        <title>Hamiltonella defensa, genome evolution of protective bacterial endosymbiont from pathogenic ancestors.</title>
        <authorList>
            <person name="Degnan P.H."/>
            <person name="Yu Y."/>
            <person name="Sisneros N."/>
            <person name="Wing R.A."/>
            <person name="Moran N.A."/>
        </authorList>
    </citation>
    <scope>NUCLEOTIDE SEQUENCE [LARGE SCALE GENOMIC DNA]</scope>
    <source>
        <strain>5AT</strain>
    </source>
</reference>
<gene>
    <name evidence="1" type="primary">metG</name>
    <name type="ordered locus">HDEF_1807</name>
</gene>
<dbReference type="EC" id="6.1.1.10" evidence="1"/>
<dbReference type="EMBL" id="CP001277">
    <property type="protein sequence ID" value="ACQ68402.1"/>
    <property type="molecule type" value="Genomic_DNA"/>
</dbReference>
<dbReference type="SMR" id="C4K759"/>
<dbReference type="STRING" id="572265.HDEF_1807"/>
<dbReference type="KEGG" id="hde:HDEF_1807"/>
<dbReference type="eggNOG" id="COG0143">
    <property type="taxonomic scope" value="Bacteria"/>
</dbReference>
<dbReference type="HOGENOM" id="CLU_009710_7_0_6"/>
<dbReference type="Proteomes" id="UP000002334">
    <property type="component" value="Chromosome"/>
</dbReference>
<dbReference type="GO" id="GO:0005829">
    <property type="term" value="C:cytosol"/>
    <property type="evidence" value="ECO:0007669"/>
    <property type="project" value="TreeGrafter"/>
</dbReference>
<dbReference type="GO" id="GO:0005524">
    <property type="term" value="F:ATP binding"/>
    <property type="evidence" value="ECO:0007669"/>
    <property type="project" value="UniProtKB-UniRule"/>
</dbReference>
<dbReference type="GO" id="GO:0046872">
    <property type="term" value="F:metal ion binding"/>
    <property type="evidence" value="ECO:0007669"/>
    <property type="project" value="UniProtKB-KW"/>
</dbReference>
<dbReference type="GO" id="GO:0004825">
    <property type="term" value="F:methionine-tRNA ligase activity"/>
    <property type="evidence" value="ECO:0007669"/>
    <property type="project" value="UniProtKB-UniRule"/>
</dbReference>
<dbReference type="GO" id="GO:0006431">
    <property type="term" value="P:methionyl-tRNA aminoacylation"/>
    <property type="evidence" value="ECO:0007669"/>
    <property type="project" value="UniProtKB-UniRule"/>
</dbReference>
<dbReference type="CDD" id="cd07957">
    <property type="entry name" value="Anticodon_Ia_Met"/>
    <property type="match status" value="1"/>
</dbReference>
<dbReference type="CDD" id="cd00814">
    <property type="entry name" value="MetRS_core"/>
    <property type="match status" value="1"/>
</dbReference>
<dbReference type="FunFam" id="1.10.730.10:FF:000005">
    <property type="entry name" value="Methionine--tRNA ligase"/>
    <property type="match status" value="1"/>
</dbReference>
<dbReference type="FunFam" id="2.20.28.20:FF:000001">
    <property type="entry name" value="Methionine--tRNA ligase"/>
    <property type="match status" value="1"/>
</dbReference>
<dbReference type="Gene3D" id="3.40.50.620">
    <property type="entry name" value="HUPs"/>
    <property type="match status" value="1"/>
</dbReference>
<dbReference type="Gene3D" id="1.10.730.10">
    <property type="entry name" value="Isoleucyl-tRNA Synthetase, Domain 1"/>
    <property type="match status" value="1"/>
</dbReference>
<dbReference type="Gene3D" id="2.20.28.20">
    <property type="entry name" value="Methionyl-tRNA synthetase, Zn-domain"/>
    <property type="match status" value="1"/>
</dbReference>
<dbReference type="HAMAP" id="MF_00098">
    <property type="entry name" value="Met_tRNA_synth_type1"/>
    <property type="match status" value="1"/>
</dbReference>
<dbReference type="InterPro" id="IPR001412">
    <property type="entry name" value="aa-tRNA-synth_I_CS"/>
</dbReference>
<dbReference type="InterPro" id="IPR041872">
    <property type="entry name" value="Anticodon_Met"/>
</dbReference>
<dbReference type="InterPro" id="IPR023458">
    <property type="entry name" value="Met-tRNA_ligase_1"/>
</dbReference>
<dbReference type="InterPro" id="IPR014758">
    <property type="entry name" value="Met-tRNA_synth"/>
</dbReference>
<dbReference type="InterPro" id="IPR015413">
    <property type="entry name" value="Methionyl/Leucyl_tRNA_Synth"/>
</dbReference>
<dbReference type="InterPro" id="IPR033911">
    <property type="entry name" value="MetRS_core"/>
</dbReference>
<dbReference type="InterPro" id="IPR029038">
    <property type="entry name" value="MetRS_Zn"/>
</dbReference>
<dbReference type="InterPro" id="IPR014729">
    <property type="entry name" value="Rossmann-like_a/b/a_fold"/>
</dbReference>
<dbReference type="InterPro" id="IPR009080">
    <property type="entry name" value="tRNAsynth_Ia_anticodon-bd"/>
</dbReference>
<dbReference type="NCBIfam" id="TIGR00398">
    <property type="entry name" value="metG"/>
    <property type="match status" value="1"/>
</dbReference>
<dbReference type="NCBIfam" id="NF001100">
    <property type="entry name" value="PRK00133.1"/>
    <property type="match status" value="1"/>
</dbReference>
<dbReference type="PANTHER" id="PTHR45765">
    <property type="entry name" value="METHIONINE--TRNA LIGASE"/>
    <property type="match status" value="1"/>
</dbReference>
<dbReference type="PANTHER" id="PTHR45765:SF1">
    <property type="entry name" value="METHIONINE--TRNA LIGASE, CYTOPLASMIC"/>
    <property type="match status" value="1"/>
</dbReference>
<dbReference type="Pfam" id="PF19303">
    <property type="entry name" value="Anticodon_3"/>
    <property type="match status" value="1"/>
</dbReference>
<dbReference type="Pfam" id="PF09334">
    <property type="entry name" value="tRNA-synt_1g"/>
    <property type="match status" value="1"/>
</dbReference>
<dbReference type="PRINTS" id="PR01041">
    <property type="entry name" value="TRNASYNTHMET"/>
</dbReference>
<dbReference type="SUPFAM" id="SSF47323">
    <property type="entry name" value="Anticodon-binding domain of a subclass of class I aminoacyl-tRNA synthetases"/>
    <property type="match status" value="1"/>
</dbReference>
<dbReference type="SUPFAM" id="SSF57770">
    <property type="entry name" value="Methionyl-tRNA synthetase (MetRS), Zn-domain"/>
    <property type="match status" value="1"/>
</dbReference>
<dbReference type="SUPFAM" id="SSF52374">
    <property type="entry name" value="Nucleotidylyl transferase"/>
    <property type="match status" value="1"/>
</dbReference>
<dbReference type="PROSITE" id="PS00178">
    <property type="entry name" value="AA_TRNA_LIGASE_I"/>
    <property type="match status" value="1"/>
</dbReference>
<keyword id="KW-0030">Aminoacyl-tRNA synthetase</keyword>
<keyword id="KW-0067">ATP-binding</keyword>
<keyword id="KW-0963">Cytoplasm</keyword>
<keyword id="KW-0436">Ligase</keyword>
<keyword id="KW-0479">Metal-binding</keyword>
<keyword id="KW-0547">Nucleotide-binding</keyword>
<keyword id="KW-0648">Protein biosynthesis</keyword>
<keyword id="KW-0862">Zinc</keyword>
<evidence type="ECO:0000255" key="1">
    <source>
        <dbReference type="HAMAP-Rule" id="MF_00098"/>
    </source>
</evidence>
<organism>
    <name type="scientific">Hamiltonella defensa subsp. Acyrthosiphon pisum (strain 5AT)</name>
    <dbReference type="NCBI Taxonomy" id="572265"/>
    <lineage>
        <taxon>Bacteria</taxon>
        <taxon>Pseudomonadati</taxon>
        <taxon>Pseudomonadota</taxon>
        <taxon>Gammaproteobacteria</taxon>
        <taxon>Enterobacterales</taxon>
        <taxon>Enterobacteriaceae</taxon>
        <taxon>aphid secondary symbionts</taxon>
        <taxon>Candidatus Hamiltonella</taxon>
    </lineage>
</organism>
<sequence length="545" mass="62506">MTESIKKILVTCALPYANGPIHLGHMLEHIQADIWVRYQRMRGHEVYFICADDAHGTAIMLKAEKSGINPEKMIEEINQQHQNDFSGFLISYDHYYSTHSDENRELSVAIYQRLKAKGHIKKRAISQLYDPEKKLFLPDRFVKGTCPKCQAPNQYGDNCEACGSTYSSTELIAPKSEVSGATPVIRESEHFFFDLPAFTGMLTQWIHSGALQEQVANKMQTWLTSGLRQWDITRDTPYFGFEIPDAPDKYFYVWLDAPIGYMGSFKNFCDKKENVSFDEFWQTDTKTELYHFIGKDIVYFHSLFWPAVLEGSDFRKPTNLFVHGYITVNGAKMSKSRGTFIEASDYLKHLDPDCLRYYYAAKLSSHIDDIDLNLEDFVQRVNADLVNKVVNLAARNASFINKKFAGILSKELADSELYFTFVQAGLRIANAYHARETSKAIREIMALADLANRYVDEQAPWVLAKKEVDEAKLQSVCSMGIHLFRILMTYLKPVLPALSERSEAFLNTELTWDSINEPLLNHEIKPFKALFNRIDNDKIVAMLKC</sequence>
<name>SYM_HAMD5</name>
<feature type="chain" id="PRO_1000202757" description="Methionine--tRNA ligase">
    <location>
        <begin position="1"/>
        <end position="545"/>
    </location>
</feature>
<feature type="short sequence motif" description="'HIGH' region">
    <location>
        <begin position="15"/>
        <end position="25"/>
    </location>
</feature>
<feature type="short sequence motif" description="'KMSKS' region">
    <location>
        <begin position="332"/>
        <end position="336"/>
    </location>
</feature>
<feature type="binding site" evidence="1">
    <location>
        <position position="146"/>
    </location>
    <ligand>
        <name>Zn(2+)</name>
        <dbReference type="ChEBI" id="CHEBI:29105"/>
    </ligand>
</feature>
<feature type="binding site" evidence="1">
    <location>
        <position position="149"/>
    </location>
    <ligand>
        <name>Zn(2+)</name>
        <dbReference type="ChEBI" id="CHEBI:29105"/>
    </ligand>
</feature>
<feature type="binding site" evidence="1">
    <location>
        <position position="159"/>
    </location>
    <ligand>
        <name>Zn(2+)</name>
        <dbReference type="ChEBI" id="CHEBI:29105"/>
    </ligand>
</feature>
<feature type="binding site" evidence="1">
    <location>
        <position position="162"/>
    </location>
    <ligand>
        <name>Zn(2+)</name>
        <dbReference type="ChEBI" id="CHEBI:29105"/>
    </ligand>
</feature>
<feature type="binding site" evidence="1">
    <location>
        <position position="335"/>
    </location>
    <ligand>
        <name>ATP</name>
        <dbReference type="ChEBI" id="CHEBI:30616"/>
    </ligand>
</feature>